<protein>
    <recommendedName>
        <fullName evidence="1">Imidazolonepropionase</fullName>
        <ecNumber evidence="1">3.5.2.7</ecNumber>
    </recommendedName>
    <alternativeName>
        <fullName evidence="1">Imidazolone-5-propionate hydrolase</fullName>
    </alternativeName>
</protein>
<feature type="chain" id="PRO_0000306452" description="Imidazolonepropionase">
    <location>
        <begin position="1"/>
        <end position="407"/>
    </location>
</feature>
<feature type="binding site" evidence="1">
    <location>
        <position position="68"/>
    </location>
    <ligand>
        <name>Fe(3+)</name>
        <dbReference type="ChEBI" id="CHEBI:29034"/>
    </ligand>
</feature>
<feature type="binding site" evidence="1">
    <location>
        <position position="68"/>
    </location>
    <ligand>
        <name>Zn(2+)</name>
        <dbReference type="ChEBI" id="CHEBI:29105"/>
    </ligand>
</feature>
<feature type="binding site" evidence="1">
    <location>
        <position position="70"/>
    </location>
    <ligand>
        <name>Fe(3+)</name>
        <dbReference type="ChEBI" id="CHEBI:29034"/>
    </ligand>
</feature>
<feature type="binding site" evidence="1">
    <location>
        <position position="70"/>
    </location>
    <ligand>
        <name>Zn(2+)</name>
        <dbReference type="ChEBI" id="CHEBI:29105"/>
    </ligand>
</feature>
<feature type="binding site" evidence="1">
    <location>
        <position position="77"/>
    </location>
    <ligand>
        <name>4-imidazolone-5-propanoate</name>
        <dbReference type="ChEBI" id="CHEBI:77893"/>
    </ligand>
</feature>
<feature type="binding site" evidence="1">
    <location>
        <position position="140"/>
    </location>
    <ligand>
        <name>4-imidazolone-5-propanoate</name>
        <dbReference type="ChEBI" id="CHEBI:77893"/>
    </ligand>
</feature>
<feature type="binding site" evidence="1">
    <location>
        <position position="140"/>
    </location>
    <ligand>
        <name>N-formimidoyl-L-glutamate</name>
        <dbReference type="ChEBI" id="CHEBI:58928"/>
    </ligand>
</feature>
<feature type="binding site" evidence="1">
    <location>
        <position position="173"/>
    </location>
    <ligand>
        <name>4-imidazolone-5-propanoate</name>
        <dbReference type="ChEBI" id="CHEBI:77893"/>
    </ligand>
</feature>
<feature type="binding site" evidence="1">
    <location>
        <position position="238"/>
    </location>
    <ligand>
        <name>Fe(3+)</name>
        <dbReference type="ChEBI" id="CHEBI:29034"/>
    </ligand>
</feature>
<feature type="binding site" evidence="1">
    <location>
        <position position="238"/>
    </location>
    <ligand>
        <name>Zn(2+)</name>
        <dbReference type="ChEBI" id="CHEBI:29105"/>
    </ligand>
</feature>
<feature type="binding site" evidence="1">
    <location>
        <position position="241"/>
    </location>
    <ligand>
        <name>4-imidazolone-5-propanoate</name>
        <dbReference type="ChEBI" id="CHEBI:77893"/>
    </ligand>
</feature>
<feature type="binding site" evidence="1">
    <location>
        <position position="313"/>
    </location>
    <ligand>
        <name>Fe(3+)</name>
        <dbReference type="ChEBI" id="CHEBI:29034"/>
    </ligand>
</feature>
<feature type="binding site" evidence="1">
    <location>
        <position position="313"/>
    </location>
    <ligand>
        <name>Zn(2+)</name>
        <dbReference type="ChEBI" id="CHEBI:29105"/>
    </ligand>
</feature>
<feature type="binding site" evidence="1">
    <location>
        <position position="315"/>
    </location>
    <ligand>
        <name>N-formimidoyl-L-glutamate</name>
        <dbReference type="ChEBI" id="CHEBI:58928"/>
    </ligand>
</feature>
<feature type="binding site" evidence="1">
    <location>
        <position position="317"/>
    </location>
    <ligand>
        <name>N-formimidoyl-L-glutamate</name>
        <dbReference type="ChEBI" id="CHEBI:58928"/>
    </ligand>
</feature>
<feature type="binding site" evidence="1">
    <location>
        <position position="318"/>
    </location>
    <ligand>
        <name>4-imidazolone-5-propanoate</name>
        <dbReference type="ChEBI" id="CHEBI:77893"/>
    </ligand>
</feature>
<gene>
    <name evidence="1" type="primary">hutI</name>
    <name type="ordered locus">BURPS1710b_2792</name>
</gene>
<evidence type="ECO:0000255" key="1">
    <source>
        <dbReference type="HAMAP-Rule" id="MF_00372"/>
    </source>
</evidence>
<comment type="function">
    <text evidence="1">Catalyzes the hydrolytic cleavage of the carbon-nitrogen bond in imidazolone-5-propanoate to yield N-formimidoyl-L-glutamate. It is the third step in the universal histidine degradation pathway.</text>
</comment>
<comment type="catalytic activity">
    <reaction evidence="1">
        <text>4-imidazolone-5-propanoate + H2O = N-formimidoyl-L-glutamate</text>
        <dbReference type="Rhea" id="RHEA:23660"/>
        <dbReference type="ChEBI" id="CHEBI:15377"/>
        <dbReference type="ChEBI" id="CHEBI:58928"/>
        <dbReference type="ChEBI" id="CHEBI:77893"/>
        <dbReference type="EC" id="3.5.2.7"/>
    </reaction>
</comment>
<comment type="cofactor">
    <cofactor evidence="1">
        <name>Zn(2+)</name>
        <dbReference type="ChEBI" id="CHEBI:29105"/>
    </cofactor>
    <cofactor evidence="1">
        <name>Fe(3+)</name>
        <dbReference type="ChEBI" id="CHEBI:29034"/>
    </cofactor>
    <text evidence="1">Binds 1 zinc or iron ion per subunit.</text>
</comment>
<comment type="pathway">
    <text evidence="1">Amino-acid degradation; L-histidine degradation into L-glutamate; N-formimidoyl-L-glutamate from L-histidine: step 3/3.</text>
</comment>
<comment type="subcellular location">
    <subcellularLocation>
        <location evidence="1">Cytoplasm</location>
    </subcellularLocation>
</comment>
<comment type="similarity">
    <text evidence="1">Belongs to the metallo-dependent hydrolases superfamily. HutI family.</text>
</comment>
<sequence>MKSILWHNLKLCAHGDPNDTIADAAIAVNGDGTIAWTGRASDVPAGYVHWPREDLRGAWVTPGLVDCHTHLVYGGQRADEFAQRLAGASYEEIAQRGGGIVSTVRATRDASEAALFEQACARLRPLLAEGVTAIEIKSGYGLELASERRMLRVARQLGERFPVSVYTTFLGAHALPPEYAGRADEYIDEVCERMLPALADEGLVDAVDVFCERIGFTLAQSERVFEAAARRGLPVKMHAEQLSNGGGSALAARYRALSADHLEYLDAAGVAAMRASGTTAVLLPGAYYFIRETKLPPIDLLRRHGVPIALATDHNPGTSPLTSLLLTMNMGCTVFKLTVQEALLGVTRHAAAALGASDRHGSLAPGRQADFAVWPVSTLAELAYWFGRPLCERVVKGGVTVFTRDAR</sequence>
<accession>Q3JQH7</accession>
<keyword id="KW-0963">Cytoplasm</keyword>
<keyword id="KW-0369">Histidine metabolism</keyword>
<keyword id="KW-0378">Hydrolase</keyword>
<keyword id="KW-0408">Iron</keyword>
<keyword id="KW-0479">Metal-binding</keyword>
<keyword id="KW-0862">Zinc</keyword>
<name>HUTI_BURP1</name>
<proteinExistence type="inferred from homology"/>
<organism>
    <name type="scientific">Burkholderia pseudomallei (strain 1710b)</name>
    <dbReference type="NCBI Taxonomy" id="320372"/>
    <lineage>
        <taxon>Bacteria</taxon>
        <taxon>Pseudomonadati</taxon>
        <taxon>Pseudomonadota</taxon>
        <taxon>Betaproteobacteria</taxon>
        <taxon>Burkholderiales</taxon>
        <taxon>Burkholderiaceae</taxon>
        <taxon>Burkholderia</taxon>
        <taxon>pseudomallei group</taxon>
    </lineage>
</organism>
<reference key="1">
    <citation type="journal article" date="2010" name="Genome Biol. Evol.">
        <title>Continuing evolution of Burkholderia mallei through genome reduction and large-scale rearrangements.</title>
        <authorList>
            <person name="Losada L."/>
            <person name="Ronning C.M."/>
            <person name="DeShazer D."/>
            <person name="Woods D."/>
            <person name="Fedorova N."/>
            <person name="Kim H.S."/>
            <person name="Shabalina S.A."/>
            <person name="Pearson T.R."/>
            <person name="Brinkac L."/>
            <person name="Tan P."/>
            <person name="Nandi T."/>
            <person name="Crabtree J."/>
            <person name="Badger J."/>
            <person name="Beckstrom-Sternberg S."/>
            <person name="Saqib M."/>
            <person name="Schutzer S.E."/>
            <person name="Keim P."/>
            <person name="Nierman W.C."/>
        </authorList>
    </citation>
    <scope>NUCLEOTIDE SEQUENCE [LARGE SCALE GENOMIC DNA]</scope>
    <source>
        <strain>1710b</strain>
    </source>
</reference>
<dbReference type="EC" id="3.5.2.7" evidence="1"/>
<dbReference type="EMBL" id="CP000124">
    <property type="protein sequence ID" value="ABA49866.1"/>
    <property type="molecule type" value="Genomic_DNA"/>
</dbReference>
<dbReference type="RefSeq" id="WP_004524690.1">
    <property type="nucleotide sequence ID" value="NC_007434.1"/>
</dbReference>
<dbReference type="SMR" id="Q3JQH7"/>
<dbReference type="EnsemblBacteria" id="ABA49866">
    <property type="protein sequence ID" value="ABA49866"/>
    <property type="gene ID" value="BURPS1710b_2792"/>
</dbReference>
<dbReference type="GeneID" id="93060911"/>
<dbReference type="KEGG" id="bpm:BURPS1710b_2792"/>
<dbReference type="HOGENOM" id="CLU_041647_0_0_4"/>
<dbReference type="UniPathway" id="UPA00379">
    <property type="reaction ID" value="UER00551"/>
</dbReference>
<dbReference type="Proteomes" id="UP000002700">
    <property type="component" value="Chromosome I"/>
</dbReference>
<dbReference type="GO" id="GO:0005737">
    <property type="term" value="C:cytoplasm"/>
    <property type="evidence" value="ECO:0007669"/>
    <property type="project" value="UniProtKB-SubCell"/>
</dbReference>
<dbReference type="GO" id="GO:0050480">
    <property type="term" value="F:imidazolonepropionase activity"/>
    <property type="evidence" value="ECO:0007669"/>
    <property type="project" value="UniProtKB-UniRule"/>
</dbReference>
<dbReference type="GO" id="GO:0005506">
    <property type="term" value="F:iron ion binding"/>
    <property type="evidence" value="ECO:0007669"/>
    <property type="project" value="UniProtKB-UniRule"/>
</dbReference>
<dbReference type="GO" id="GO:0008270">
    <property type="term" value="F:zinc ion binding"/>
    <property type="evidence" value="ECO:0007669"/>
    <property type="project" value="UniProtKB-UniRule"/>
</dbReference>
<dbReference type="GO" id="GO:0019556">
    <property type="term" value="P:L-histidine catabolic process to glutamate and formamide"/>
    <property type="evidence" value="ECO:0007669"/>
    <property type="project" value="UniProtKB-UniPathway"/>
</dbReference>
<dbReference type="GO" id="GO:0019557">
    <property type="term" value="P:L-histidine catabolic process to glutamate and formate"/>
    <property type="evidence" value="ECO:0007669"/>
    <property type="project" value="UniProtKB-UniPathway"/>
</dbReference>
<dbReference type="CDD" id="cd01296">
    <property type="entry name" value="Imidazolone-5PH"/>
    <property type="match status" value="1"/>
</dbReference>
<dbReference type="FunFam" id="3.20.20.140:FF:000007">
    <property type="entry name" value="Imidazolonepropionase"/>
    <property type="match status" value="1"/>
</dbReference>
<dbReference type="Gene3D" id="3.20.20.140">
    <property type="entry name" value="Metal-dependent hydrolases"/>
    <property type="match status" value="1"/>
</dbReference>
<dbReference type="Gene3D" id="2.30.40.10">
    <property type="entry name" value="Urease, subunit C, domain 1"/>
    <property type="match status" value="1"/>
</dbReference>
<dbReference type="HAMAP" id="MF_00372">
    <property type="entry name" value="HutI"/>
    <property type="match status" value="1"/>
</dbReference>
<dbReference type="InterPro" id="IPR006680">
    <property type="entry name" value="Amidohydro-rel"/>
</dbReference>
<dbReference type="InterPro" id="IPR005920">
    <property type="entry name" value="HutI"/>
</dbReference>
<dbReference type="InterPro" id="IPR011059">
    <property type="entry name" value="Metal-dep_hydrolase_composite"/>
</dbReference>
<dbReference type="InterPro" id="IPR032466">
    <property type="entry name" value="Metal_Hydrolase"/>
</dbReference>
<dbReference type="NCBIfam" id="TIGR01224">
    <property type="entry name" value="hutI"/>
    <property type="match status" value="1"/>
</dbReference>
<dbReference type="PANTHER" id="PTHR42752">
    <property type="entry name" value="IMIDAZOLONEPROPIONASE"/>
    <property type="match status" value="1"/>
</dbReference>
<dbReference type="PANTHER" id="PTHR42752:SF1">
    <property type="entry name" value="IMIDAZOLONEPROPIONASE-RELATED"/>
    <property type="match status" value="1"/>
</dbReference>
<dbReference type="Pfam" id="PF01979">
    <property type="entry name" value="Amidohydro_1"/>
    <property type="match status" value="1"/>
</dbReference>
<dbReference type="SUPFAM" id="SSF51338">
    <property type="entry name" value="Composite domain of metallo-dependent hydrolases"/>
    <property type="match status" value="1"/>
</dbReference>
<dbReference type="SUPFAM" id="SSF51556">
    <property type="entry name" value="Metallo-dependent hydrolases"/>
    <property type="match status" value="1"/>
</dbReference>